<proteinExistence type="evidence at protein level"/>
<keyword id="KW-0002">3D-structure</keyword>
<keyword id="KW-0963">Cytoplasm</keyword>
<keyword id="KW-1185">Reference proteome</keyword>
<keyword id="KW-0687">Ribonucleoprotein</keyword>
<keyword id="KW-0689">Ribosomal protein</keyword>
<organism>
    <name type="scientific">Neurospora crassa (strain ATCC 24698 / 74-OR23-1A / CBS 708.71 / DSM 1257 / FGSC 987)</name>
    <dbReference type="NCBI Taxonomy" id="367110"/>
    <lineage>
        <taxon>Eukaryota</taxon>
        <taxon>Fungi</taxon>
        <taxon>Dikarya</taxon>
        <taxon>Ascomycota</taxon>
        <taxon>Pezizomycotina</taxon>
        <taxon>Sordariomycetes</taxon>
        <taxon>Sordariomycetidae</taxon>
        <taxon>Sordariales</taxon>
        <taxon>Sordariaceae</taxon>
        <taxon>Neurospora</taxon>
    </lineage>
</organism>
<protein>
    <recommendedName>
        <fullName evidence="2">Large ribosomal subunit protein uL3</fullName>
    </recommendedName>
    <alternativeName>
        <fullName>60S ribosomal protein L3</fullName>
    </alternativeName>
</protein>
<gene>
    <name type="primary">rpl-3</name>
    <name type="ORF">B17B1.040</name>
    <name type="ORF">NCU06843</name>
</gene>
<accession>P59671</accession>
<accession>Q7RVZ2</accession>
<name>RL3_NEUCR</name>
<sequence>MSHRKYEAPRHGSLAYLPRKRAARHRGKVKSFPKDDAKKPVHLTAAMGYKAGMTTIVRDLDRPGAKAHKKEVVEAVTIIDTPPMIVVGLVGYIETPRGLRSLTTVWAEHLSDEVKRRFYKNWYKSKKKAFTKYVKKHSDNNGAAITRELERIKKYCTVVRVLAHTQIRKTPLKQKKAHLMEIQINGGSVADKVEFGHGLFEKPVSIDSIFEKDEVIDVIAVTKGHGFTGVTARWGTKKLPRKTHKGLRKVACIGAWHPSHVQWTVARAGQAGYHHRTSVNHKIYRIGKGDAEDSAATEVDVTKKKITPMGGFVRYGEINNDFVMVKGSVPGVKKRVMTLRKSMFVHTSRKALEKVELKWIDTSSEFGHGAFQTPAEKKQFQGTLKKDLAASS</sequence>
<reference key="1">
    <citation type="journal article" date="2003" name="Nucleic Acids Res.">
        <title>What's in the genome of a filamentous fungus? Analysis of the Neurospora genome sequence.</title>
        <authorList>
            <person name="Mannhaupt G."/>
            <person name="Montrone C."/>
            <person name="Haase D."/>
            <person name="Mewes H.-W."/>
            <person name="Aign V."/>
            <person name="Hoheisel J.D."/>
            <person name="Fartmann B."/>
            <person name="Nyakatura G."/>
            <person name="Kempken F."/>
            <person name="Maier J."/>
            <person name="Schulte U."/>
        </authorList>
    </citation>
    <scope>NUCLEOTIDE SEQUENCE [LARGE SCALE GENOMIC DNA]</scope>
    <source>
        <strain>ATCC 24698 / 74-OR23-1A / CBS 708.71 / DSM 1257 / FGSC 987</strain>
    </source>
</reference>
<reference key="2">
    <citation type="journal article" date="2003" name="Nature">
        <title>The genome sequence of the filamentous fungus Neurospora crassa.</title>
        <authorList>
            <person name="Galagan J.E."/>
            <person name="Calvo S.E."/>
            <person name="Borkovich K.A."/>
            <person name="Selker E.U."/>
            <person name="Read N.D."/>
            <person name="Jaffe D.B."/>
            <person name="FitzHugh W."/>
            <person name="Ma L.-J."/>
            <person name="Smirnov S."/>
            <person name="Purcell S."/>
            <person name="Rehman B."/>
            <person name="Elkins T."/>
            <person name="Engels R."/>
            <person name="Wang S."/>
            <person name="Nielsen C.B."/>
            <person name="Butler J."/>
            <person name="Endrizzi M."/>
            <person name="Qui D."/>
            <person name="Ianakiev P."/>
            <person name="Bell-Pedersen D."/>
            <person name="Nelson M.A."/>
            <person name="Werner-Washburne M."/>
            <person name="Selitrennikoff C.P."/>
            <person name="Kinsey J.A."/>
            <person name="Braun E.L."/>
            <person name="Zelter A."/>
            <person name="Schulte U."/>
            <person name="Kothe G.O."/>
            <person name="Jedd G."/>
            <person name="Mewes H.-W."/>
            <person name="Staben C."/>
            <person name="Marcotte E."/>
            <person name="Greenberg D."/>
            <person name="Roy A."/>
            <person name="Foley K."/>
            <person name="Naylor J."/>
            <person name="Stange-Thomann N."/>
            <person name="Barrett R."/>
            <person name="Gnerre S."/>
            <person name="Kamal M."/>
            <person name="Kamvysselis M."/>
            <person name="Mauceli E.W."/>
            <person name="Bielke C."/>
            <person name="Rudd S."/>
            <person name="Frishman D."/>
            <person name="Krystofova S."/>
            <person name="Rasmussen C."/>
            <person name="Metzenberg R.L."/>
            <person name="Perkins D.D."/>
            <person name="Kroken S."/>
            <person name="Cogoni C."/>
            <person name="Macino G."/>
            <person name="Catcheside D.E.A."/>
            <person name="Li W."/>
            <person name="Pratt R.J."/>
            <person name="Osmani S.A."/>
            <person name="DeSouza C.P.C."/>
            <person name="Glass N.L."/>
            <person name="Orbach M.J."/>
            <person name="Berglund J.A."/>
            <person name="Voelker R."/>
            <person name="Yarden O."/>
            <person name="Plamann M."/>
            <person name="Seiler S."/>
            <person name="Dunlap J.C."/>
            <person name="Radford A."/>
            <person name="Aramayo R."/>
            <person name="Natvig D.O."/>
            <person name="Alex L.A."/>
            <person name="Mannhaupt G."/>
            <person name="Ebbole D.J."/>
            <person name="Freitag M."/>
            <person name="Paulsen I."/>
            <person name="Sachs M.S."/>
            <person name="Lander E.S."/>
            <person name="Nusbaum C."/>
            <person name="Birren B.W."/>
        </authorList>
    </citation>
    <scope>NUCLEOTIDE SEQUENCE [LARGE SCALE GENOMIC DNA]</scope>
    <source>
        <strain>ATCC 24698 / 74-OR23-1A / CBS 708.71 / DSM 1257 / FGSC 987</strain>
    </source>
</reference>
<reference evidence="5" key="3">
    <citation type="journal article" date="2021" name="Proc. Natl. Acad. Sci. U.S.A.">
        <title>Structure of the translating Neurospora ribosome arrested by cycloheximide.</title>
        <authorList>
            <person name="Shen L."/>
            <person name="Su Z."/>
            <person name="Yang K."/>
            <person name="Wu C."/>
            <person name="Becker T."/>
            <person name="Bell-Pedersen D."/>
            <person name="Zhang J."/>
            <person name="Sachs M.S."/>
        </authorList>
    </citation>
    <scope>STRUCTURE BY ELECTRON MICROSCOPY (2.70 ANGSTROMS)</scope>
</reference>
<dbReference type="EMBL" id="BX284750">
    <property type="protein sequence ID" value="CAD70371.1"/>
    <property type="molecule type" value="Genomic_DNA"/>
</dbReference>
<dbReference type="EMBL" id="CM002237">
    <property type="protein sequence ID" value="EAA34081.2"/>
    <property type="molecule type" value="Genomic_DNA"/>
</dbReference>
<dbReference type="RefSeq" id="XP_963317.2">
    <property type="nucleotide sequence ID" value="XM_958224.3"/>
</dbReference>
<dbReference type="PDB" id="7R81">
    <property type="method" value="EM"/>
    <property type="resolution" value="2.70 A"/>
    <property type="chains" value="E1=1-392"/>
</dbReference>
<dbReference type="PDBsum" id="7R81"/>
<dbReference type="EMDB" id="EMD-24307"/>
<dbReference type="SMR" id="P59671"/>
<dbReference type="FunCoup" id="P59671">
    <property type="interactions" value="735"/>
</dbReference>
<dbReference type="STRING" id="367110.P59671"/>
<dbReference type="PaxDb" id="5141-EFNCRP00000006898"/>
<dbReference type="EnsemblFungi" id="EAA34081">
    <property type="protein sequence ID" value="EAA34081"/>
    <property type="gene ID" value="NCU06843"/>
</dbReference>
<dbReference type="GeneID" id="3879466"/>
<dbReference type="KEGG" id="ncr:NCU06843"/>
<dbReference type="VEuPathDB" id="FungiDB:NCU06843"/>
<dbReference type="HOGENOM" id="CLU_033361_2_1_1"/>
<dbReference type="InParanoid" id="P59671"/>
<dbReference type="OMA" id="QRTEYNK"/>
<dbReference type="OrthoDB" id="1611972at2759"/>
<dbReference type="Proteomes" id="UP000001805">
    <property type="component" value="Chromosome 6, Linkage Group II"/>
</dbReference>
<dbReference type="GO" id="GO:0022625">
    <property type="term" value="C:cytosolic large ribosomal subunit"/>
    <property type="evidence" value="ECO:0000318"/>
    <property type="project" value="GO_Central"/>
</dbReference>
<dbReference type="GO" id="GO:0003723">
    <property type="term" value="F:RNA binding"/>
    <property type="evidence" value="ECO:0000318"/>
    <property type="project" value="GO_Central"/>
</dbReference>
<dbReference type="GO" id="GO:0003735">
    <property type="term" value="F:structural constituent of ribosome"/>
    <property type="evidence" value="ECO:0000318"/>
    <property type="project" value="GO_Central"/>
</dbReference>
<dbReference type="GO" id="GO:0006412">
    <property type="term" value="P:translation"/>
    <property type="evidence" value="ECO:0000318"/>
    <property type="project" value="GO_Central"/>
</dbReference>
<dbReference type="FunFam" id="2.40.30.10:FF:000079">
    <property type="entry name" value="60S ribosomal protein L3"/>
    <property type="match status" value="1"/>
</dbReference>
<dbReference type="FunFam" id="3.30.1430.10:FF:000001">
    <property type="entry name" value="60S ribosomal protein L3"/>
    <property type="match status" value="1"/>
</dbReference>
<dbReference type="FunFam" id="4.10.960.10:FF:000001">
    <property type="entry name" value="60S ribosomal protein L3"/>
    <property type="match status" value="1"/>
</dbReference>
<dbReference type="FunFam" id="4.10.960.10:FF:000002">
    <property type="entry name" value="60S ribosomal protein L3"/>
    <property type="match status" value="1"/>
</dbReference>
<dbReference type="FunFam" id="2.40.30.10:FF:000351">
    <property type="entry name" value="Ribosomal protein L3"/>
    <property type="match status" value="1"/>
</dbReference>
<dbReference type="Gene3D" id="3.30.1430.10">
    <property type="match status" value="1"/>
</dbReference>
<dbReference type="Gene3D" id="4.10.960.10">
    <property type="entry name" value="Ribosomal protein L3, domain 3"/>
    <property type="match status" value="1"/>
</dbReference>
<dbReference type="Gene3D" id="2.40.30.10">
    <property type="entry name" value="Translation factors"/>
    <property type="match status" value="1"/>
</dbReference>
<dbReference type="InterPro" id="IPR045077">
    <property type="entry name" value="L3_arc_euk"/>
</dbReference>
<dbReference type="InterPro" id="IPR044892">
    <property type="entry name" value="Ribosomal_L3_dom_3_arc_sf"/>
</dbReference>
<dbReference type="InterPro" id="IPR000597">
    <property type="entry name" value="Ribosomal_uL3"/>
</dbReference>
<dbReference type="InterPro" id="IPR019926">
    <property type="entry name" value="Ribosomal_uL3_CS"/>
</dbReference>
<dbReference type="InterPro" id="IPR009000">
    <property type="entry name" value="Transl_B-barrel_sf"/>
</dbReference>
<dbReference type="PANTHER" id="PTHR11363">
    <property type="entry name" value="60S RIBOSOMAL PROTEIN L3-RELATED"/>
    <property type="match status" value="1"/>
</dbReference>
<dbReference type="PANTHER" id="PTHR11363:SF5">
    <property type="entry name" value="LARGE RIBOSOMAL SUBUNIT PROTEIN UL3"/>
    <property type="match status" value="1"/>
</dbReference>
<dbReference type="Pfam" id="PF00297">
    <property type="entry name" value="Ribosomal_L3"/>
    <property type="match status" value="1"/>
</dbReference>
<dbReference type="SUPFAM" id="SSF50447">
    <property type="entry name" value="Translation proteins"/>
    <property type="match status" value="1"/>
</dbReference>
<dbReference type="PROSITE" id="PS00474">
    <property type="entry name" value="RIBOSOMAL_L3"/>
    <property type="match status" value="1"/>
</dbReference>
<feature type="chain" id="PRO_0000077248" description="Large ribosomal subunit protein uL3">
    <location>
        <begin position="1"/>
        <end position="392"/>
    </location>
</feature>
<comment type="function">
    <text evidence="4">Component of the ribosome, a large ribonucleoprotein complex responsible for the synthesis of proteins in the cell. The small ribosomal subunit (SSU) binds messenger RNAs (mRNAs) and translates the encoded message by selecting cognate aminoacyl-transfer RNA (tRNA) molecules. The large subunit (LSU) contains the ribosomal catalytic site termed the peptidyl transferase center (PTC), which catalyzes the formation of peptide bonds, thereby polymerizing the amino acids delivered by tRNAs into a polypeptide chain. The nascent polypeptides leave the ribosome through a tunnel in the LSU and interact with protein factors that function in enzymatic processing, targeting, and the membrane insertion of nascent chains at the exit of the ribosomal tunnel.</text>
</comment>
<comment type="subunit">
    <text evidence="1">Component of the large ribosomal subunit (LSU). Mature N.crassa ribosomes consist of a small (40S) and a large (60S) subunit. The 40S small subunit contains 1 molecule of ribosomal RNA (18S rRNA) and at least 32 different proteins. The large 60S subunit contains 3 rRNA molecules (26S, 5.8S and 5S rRNA) and at least 42 different proteins.</text>
</comment>
<comment type="subcellular location">
    <subcellularLocation>
        <location evidence="1">Cytoplasm</location>
    </subcellularLocation>
</comment>
<comment type="similarity">
    <text evidence="3">Belongs to the universal ribosomal protein uL3 family.</text>
</comment>
<evidence type="ECO:0000269" key="1">
    <source>
    </source>
</evidence>
<evidence type="ECO:0000303" key="2">
    <source>
    </source>
</evidence>
<evidence type="ECO:0000305" key="3"/>
<evidence type="ECO:0000305" key="4">
    <source>
    </source>
</evidence>
<evidence type="ECO:0007744" key="5">
    <source>
        <dbReference type="PDB" id="7R81"/>
    </source>
</evidence>